<name>RL32_KLEP7</name>
<keyword id="KW-0687">Ribonucleoprotein</keyword>
<keyword id="KW-0689">Ribosomal protein</keyword>
<dbReference type="EMBL" id="CP000647">
    <property type="protein sequence ID" value="ABR76520.1"/>
    <property type="molecule type" value="Genomic_DNA"/>
</dbReference>
<dbReference type="RefSeq" id="WP_000290724.1">
    <property type="nucleotide sequence ID" value="NC_009648.1"/>
</dbReference>
<dbReference type="SMR" id="A6T7E9"/>
<dbReference type="STRING" id="272620.KPN_01087"/>
<dbReference type="jPOST" id="A6T7E9"/>
<dbReference type="PaxDb" id="272620-KPN_01087"/>
<dbReference type="EnsemblBacteria" id="ABR76520">
    <property type="protein sequence ID" value="ABR76520"/>
    <property type="gene ID" value="KPN_01087"/>
</dbReference>
<dbReference type="GeneID" id="93754871"/>
<dbReference type="KEGG" id="kpn:KPN_01087"/>
<dbReference type="HOGENOM" id="CLU_129084_2_1_6"/>
<dbReference type="Proteomes" id="UP000000265">
    <property type="component" value="Chromosome"/>
</dbReference>
<dbReference type="GO" id="GO:0015934">
    <property type="term" value="C:large ribosomal subunit"/>
    <property type="evidence" value="ECO:0007669"/>
    <property type="project" value="InterPro"/>
</dbReference>
<dbReference type="GO" id="GO:0003735">
    <property type="term" value="F:structural constituent of ribosome"/>
    <property type="evidence" value="ECO:0007669"/>
    <property type="project" value="InterPro"/>
</dbReference>
<dbReference type="GO" id="GO:0006412">
    <property type="term" value="P:translation"/>
    <property type="evidence" value="ECO:0007669"/>
    <property type="project" value="UniProtKB-UniRule"/>
</dbReference>
<dbReference type="HAMAP" id="MF_00340">
    <property type="entry name" value="Ribosomal_bL32"/>
    <property type="match status" value="1"/>
</dbReference>
<dbReference type="InterPro" id="IPR002677">
    <property type="entry name" value="Ribosomal_bL32"/>
</dbReference>
<dbReference type="InterPro" id="IPR044957">
    <property type="entry name" value="Ribosomal_bL32_bact"/>
</dbReference>
<dbReference type="InterPro" id="IPR011332">
    <property type="entry name" value="Ribosomal_zn-bd"/>
</dbReference>
<dbReference type="NCBIfam" id="TIGR01031">
    <property type="entry name" value="rpmF_bact"/>
    <property type="match status" value="1"/>
</dbReference>
<dbReference type="PANTHER" id="PTHR35534">
    <property type="entry name" value="50S RIBOSOMAL PROTEIN L32"/>
    <property type="match status" value="1"/>
</dbReference>
<dbReference type="PANTHER" id="PTHR35534:SF1">
    <property type="entry name" value="LARGE RIBOSOMAL SUBUNIT PROTEIN BL32"/>
    <property type="match status" value="1"/>
</dbReference>
<dbReference type="Pfam" id="PF01783">
    <property type="entry name" value="Ribosomal_L32p"/>
    <property type="match status" value="1"/>
</dbReference>
<dbReference type="SUPFAM" id="SSF57829">
    <property type="entry name" value="Zn-binding ribosomal proteins"/>
    <property type="match status" value="1"/>
</dbReference>
<sequence>MAVQQNKPTRSKRGMRRSHDALTAVTSLSVDKTSGEKHLRHHITADGFYRGRKVIAK</sequence>
<comment type="similarity">
    <text evidence="1">Belongs to the bacterial ribosomal protein bL32 family.</text>
</comment>
<feature type="chain" id="PRO_1000005063" description="Large ribosomal subunit protein bL32">
    <location>
        <begin position="1"/>
        <end position="57"/>
    </location>
</feature>
<feature type="region of interest" description="Disordered" evidence="2">
    <location>
        <begin position="1"/>
        <end position="37"/>
    </location>
</feature>
<accession>A6T7E9</accession>
<gene>
    <name evidence="1" type="primary">rpmF</name>
    <name type="ordered locus">KPN78578_10590</name>
    <name type="ORF">KPN_01087</name>
</gene>
<reference key="1">
    <citation type="submission" date="2006-09" db="EMBL/GenBank/DDBJ databases">
        <authorList>
            <consortium name="The Klebsiella pneumonia Genome Sequencing Project"/>
            <person name="McClelland M."/>
            <person name="Sanderson E.K."/>
            <person name="Spieth J."/>
            <person name="Clifton W.S."/>
            <person name="Latreille P."/>
            <person name="Sabo A."/>
            <person name="Pepin K."/>
            <person name="Bhonagiri V."/>
            <person name="Porwollik S."/>
            <person name="Ali J."/>
            <person name="Wilson R.K."/>
        </authorList>
    </citation>
    <scope>NUCLEOTIDE SEQUENCE [LARGE SCALE GENOMIC DNA]</scope>
    <source>
        <strain>ATCC 700721 / MGH 78578</strain>
    </source>
</reference>
<protein>
    <recommendedName>
        <fullName evidence="1">Large ribosomal subunit protein bL32</fullName>
    </recommendedName>
    <alternativeName>
        <fullName evidence="3">50S ribosomal protein L32</fullName>
    </alternativeName>
</protein>
<evidence type="ECO:0000255" key="1">
    <source>
        <dbReference type="HAMAP-Rule" id="MF_00340"/>
    </source>
</evidence>
<evidence type="ECO:0000256" key="2">
    <source>
        <dbReference type="SAM" id="MobiDB-lite"/>
    </source>
</evidence>
<evidence type="ECO:0000305" key="3"/>
<proteinExistence type="inferred from homology"/>
<organism>
    <name type="scientific">Klebsiella pneumoniae subsp. pneumoniae (strain ATCC 700721 / MGH 78578)</name>
    <dbReference type="NCBI Taxonomy" id="272620"/>
    <lineage>
        <taxon>Bacteria</taxon>
        <taxon>Pseudomonadati</taxon>
        <taxon>Pseudomonadota</taxon>
        <taxon>Gammaproteobacteria</taxon>
        <taxon>Enterobacterales</taxon>
        <taxon>Enterobacteriaceae</taxon>
        <taxon>Klebsiella/Raoultella group</taxon>
        <taxon>Klebsiella</taxon>
        <taxon>Klebsiella pneumoniae complex</taxon>
    </lineage>
</organism>